<protein>
    <recommendedName>
        <fullName evidence="1">Low affinity potassium transport system protein Kup</fullName>
    </recommendedName>
    <alternativeName>
        <fullName evidence="1">Kup system potassium uptake protein</fullName>
    </alternativeName>
</protein>
<accession>Q3YVL0</accession>
<comment type="function">
    <text evidence="1">Responsible for the low-affinity transport of potassium into the cell. Likely operates as a K(+):H(+) symporter.</text>
</comment>
<comment type="catalytic activity">
    <reaction evidence="1">
        <text>K(+)(in) + H(+)(in) = K(+)(out) + H(+)(out)</text>
        <dbReference type="Rhea" id="RHEA:28490"/>
        <dbReference type="ChEBI" id="CHEBI:15378"/>
        <dbReference type="ChEBI" id="CHEBI:29103"/>
    </reaction>
    <physiologicalReaction direction="right-to-left" evidence="1">
        <dbReference type="Rhea" id="RHEA:28492"/>
    </physiologicalReaction>
</comment>
<comment type="subcellular location">
    <subcellularLocation>
        <location evidence="1">Cell inner membrane</location>
        <topology evidence="1">Multi-pass membrane protein</topology>
    </subcellularLocation>
</comment>
<comment type="similarity">
    <text evidence="1">Belongs to the HAK/KUP transporter (TC 2.A.72) family.</text>
</comment>
<name>KUP_SHISS</name>
<gene>
    <name evidence="1" type="primary">kup</name>
    <name type="ordered locus">SSON_3917</name>
</gene>
<feature type="chain" id="PRO_0000279831" description="Low affinity potassium transport system protein Kup">
    <location>
        <begin position="1"/>
        <end position="622"/>
    </location>
</feature>
<feature type="transmembrane region" description="Helical" evidence="1">
    <location>
        <begin position="9"/>
        <end position="29"/>
    </location>
</feature>
<feature type="transmembrane region" description="Helical" evidence="1">
    <location>
        <begin position="49"/>
        <end position="69"/>
    </location>
</feature>
<feature type="transmembrane region" description="Helical" evidence="1">
    <location>
        <begin position="103"/>
        <end position="123"/>
    </location>
</feature>
<feature type="transmembrane region" description="Helical" evidence="1">
    <location>
        <begin position="137"/>
        <end position="157"/>
    </location>
</feature>
<feature type="transmembrane region" description="Helical" evidence="1">
    <location>
        <begin position="165"/>
        <end position="185"/>
    </location>
</feature>
<feature type="transmembrane region" description="Helical" evidence="1">
    <location>
        <begin position="213"/>
        <end position="233"/>
    </location>
</feature>
<feature type="transmembrane region" description="Helical" evidence="1">
    <location>
        <begin position="247"/>
        <end position="267"/>
    </location>
</feature>
<feature type="transmembrane region" description="Helical" evidence="1">
    <location>
        <begin position="276"/>
        <end position="296"/>
    </location>
</feature>
<feature type="transmembrane region" description="Helical" evidence="1">
    <location>
        <begin position="337"/>
        <end position="357"/>
    </location>
</feature>
<feature type="transmembrane region" description="Helical" evidence="1">
    <location>
        <begin position="363"/>
        <end position="383"/>
    </location>
</feature>
<feature type="transmembrane region" description="Helical" evidence="1">
    <location>
        <begin position="396"/>
        <end position="416"/>
    </location>
</feature>
<feature type="transmembrane region" description="Helical" evidence="1">
    <location>
        <begin position="419"/>
        <end position="439"/>
    </location>
</feature>
<proteinExistence type="inferred from homology"/>
<evidence type="ECO:0000255" key="1">
    <source>
        <dbReference type="HAMAP-Rule" id="MF_01522"/>
    </source>
</evidence>
<organism>
    <name type="scientific">Shigella sonnei (strain Ss046)</name>
    <dbReference type="NCBI Taxonomy" id="300269"/>
    <lineage>
        <taxon>Bacteria</taxon>
        <taxon>Pseudomonadati</taxon>
        <taxon>Pseudomonadota</taxon>
        <taxon>Gammaproteobacteria</taxon>
        <taxon>Enterobacterales</taxon>
        <taxon>Enterobacteriaceae</taxon>
        <taxon>Shigella</taxon>
    </lineage>
</organism>
<keyword id="KW-0997">Cell inner membrane</keyword>
<keyword id="KW-1003">Cell membrane</keyword>
<keyword id="KW-0406">Ion transport</keyword>
<keyword id="KW-0472">Membrane</keyword>
<keyword id="KW-0630">Potassium</keyword>
<keyword id="KW-0633">Potassium transport</keyword>
<keyword id="KW-1185">Reference proteome</keyword>
<keyword id="KW-0769">Symport</keyword>
<keyword id="KW-0812">Transmembrane</keyword>
<keyword id="KW-1133">Transmembrane helix</keyword>
<keyword id="KW-0813">Transport</keyword>
<reference key="1">
    <citation type="journal article" date="2005" name="Nucleic Acids Res.">
        <title>Genome dynamics and diversity of Shigella species, the etiologic agents of bacillary dysentery.</title>
        <authorList>
            <person name="Yang F."/>
            <person name="Yang J."/>
            <person name="Zhang X."/>
            <person name="Chen L."/>
            <person name="Jiang Y."/>
            <person name="Yan Y."/>
            <person name="Tang X."/>
            <person name="Wang J."/>
            <person name="Xiong Z."/>
            <person name="Dong J."/>
            <person name="Xue Y."/>
            <person name="Zhu Y."/>
            <person name="Xu X."/>
            <person name="Sun L."/>
            <person name="Chen S."/>
            <person name="Nie H."/>
            <person name="Peng J."/>
            <person name="Xu J."/>
            <person name="Wang Y."/>
            <person name="Yuan Z."/>
            <person name="Wen Y."/>
            <person name="Yao Z."/>
            <person name="Shen Y."/>
            <person name="Qiang B."/>
            <person name="Hou Y."/>
            <person name="Yu J."/>
            <person name="Jin Q."/>
        </authorList>
    </citation>
    <scope>NUCLEOTIDE SEQUENCE [LARGE SCALE GENOMIC DNA]</scope>
    <source>
        <strain>Ss046</strain>
    </source>
</reference>
<dbReference type="EMBL" id="CP000038">
    <property type="protein sequence ID" value="AAZ90452.1"/>
    <property type="molecule type" value="Genomic_DNA"/>
</dbReference>
<dbReference type="RefSeq" id="WP_000102304.1">
    <property type="nucleotide sequence ID" value="NC_007384.1"/>
</dbReference>
<dbReference type="GeneID" id="93778202"/>
<dbReference type="KEGG" id="ssn:SSON_3917"/>
<dbReference type="HOGENOM" id="CLU_008142_4_2_6"/>
<dbReference type="Proteomes" id="UP000002529">
    <property type="component" value="Chromosome"/>
</dbReference>
<dbReference type="GO" id="GO:0005886">
    <property type="term" value="C:plasma membrane"/>
    <property type="evidence" value="ECO:0007669"/>
    <property type="project" value="UniProtKB-SubCell"/>
</dbReference>
<dbReference type="GO" id="GO:0015079">
    <property type="term" value="F:potassium ion transmembrane transporter activity"/>
    <property type="evidence" value="ECO:0007669"/>
    <property type="project" value="UniProtKB-UniRule"/>
</dbReference>
<dbReference type="GO" id="GO:0015293">
    <property type="term" value="F:symporter activity"/>
    <property type="evidence" value="ECO:0007669"/>
    <property type="project" value="UniProtKB-UniRule"/>
</dbReference>
<dbReference type="HAMAP" id="MF_01522">
    <property type="entry name" value="Kup"/>
    <property type="match status" value="1"/>
</dbReference>
<dbReference type="InterPro" id="IPR003855">
    <property type="entry name" value="K+_transporter"/>
</dbReference>
<dbReference type="InterPro" id="IPR053952">
    <property type="entry name" value="K_trans_C"/>
</dbReference>
<dbReference type="InterPro" id="IPR053951">
    <property type="entry name" value="K_trans_N"/>
</dbReference>
<dbReference type="InterPro" id="IPR023051">
    <property type="entry name" value="Kup"/>
</dbReference>
<dbReference type="NCBIfam" id="TIGR00794">
    <property type="entry name" value="kup"/>
    <property type="match status" value="1"/>
</dbReference>
<dbReference type="NCBIfam" id="NF008015">
    <property type="entry name" value="PRK10745.1"/>
    <property type="match status" value="1"/>
</dbReference>
<dbReference type="PANTHER" id="PTHR30540:SF79">
    <property type="entry name" value="LOW AFFINITY POTASSIUM TRANSPORT SYSTEM PROTEIN KUP"/>
    <property type="match status" value="1"/>
</dbReference>
<dbReference type="PANTHER" id="PTHR30540">
    <property type="entry name" value="OSMOTIC STRESS POTASSIUM TRANSPORTER"/>
    <property type="match status" value="1"/>
</dbReference>
<dbReference type="Pfam" id="PF02705">
    <property type="entry name" value="K_trans"/>
    <property type="match status" value="1"/>
</dbReference>
<dbReference type="Pfam" id="PF22776">
    <property type="entry name" value="K_trans_C"/>
    <property type="match status" value="1"/>
</dbReference>
<sequence>MSTDNKQSLPAITLAAIGVVYGDIGTSPLYTLRECLSGQFGFGVERDAVFGFLSLIFWLLIFVVSIKYLTFVMRADNAGEGGILTLMSLAGRNTSARTTSMLVIMGLIGGSFFYGEVVITPAISVMSAIEGLEIVAPQLDTWIVPLSIIVLTLLFMIQKHGTAMVGKLFAPIMLTWFLILAGLGLRSIIANPEVLHALNPMWAMHFFLEYKTVSFIALGAVVLSITGVEALYADMGHFGKFPIRLAWFTVVLPSLTLNYFGQGALLLKNPEAIKNPFFLLAPDWALIPLLIIAALATVIASQAVISGVFSLTRQAVRLGYLSPMRIIHTSEMESGQIYIPFVNWMLYVAVVIVIVSFEHSSNLAAAYGIAVTGTMVLTSILSTTVARQNWHWNKYFVALILIAFLCVDIPLFTANLDKLLSGGWLPLSLGTVMFIVMTTWKSERFRLLRRMHEHGNSLEAMIASLEKSPPVRVPGTAVYMSRAINVIPFALMHNLKHNKVLHERVILLTLRTEDAPYVHNVRRVQIEQLSPTFWRVVASYGWRETPNVEEVFHRCGLEGLSCRMMETSFFMSHESLILGKRPWYLRLRGKLYLLLQRNALRAPDQFEIPPNRVIELGTQVEI</sequence>